<protein>
    <recommendedName>
        <fullName evidence="1">Large ribosomal subunit protein uL4</fullName>
    </recommendedName>
    <alternativeName>
        <fullName evidence="3">50S ribosomal protein L4</fullName>
    </alternativeName>
</protein>
<evidence type="ECO:0000255" key="1">
    <source>
        <dbReference type="HAMAP-Rule" id="MF_01328"/>
    </source>
</evidence>
<evidence type="ECO:0000256" key="2">
    <source>
        <dbReference type="SAM" id="MobiDB-lite"/>
    </source>
</evidence>
<evidence type="ECO:0000305" key="3"/>
<accession>A8EZL5</accession>
<name>RL4_RICCK</name>
<sequence length="207" mass="23066">MKTKILSLANEEVGEISLNKDIFAVEFIRDDIIKQVIDWQRAKAMSGNHKTKTVSEVSGTTKKPFKQKGTGNARQGSLRSVQMRGGGLAHGPIVRSHATQLPKKVRKLGLIHALSEKFAEGKLLVIDSLKLDKPKTSFLVNILNKFQGQSFFVIDGNEVDINFSLAAKNIYNTVIVPQIGANVYDIIRHEYVLLSQEAVNVLEERLR</sequence>
<gene>
    <name evidence="1" type="primary">rplD</name>
    <name type="ordered locus">A1E_04365</name>
</gene>
<organism>
    <name type="scientific">Rickettsia canadensis (strain McKiel)</name>
    <dbReference type="NCBI Taxonomy" id="293613"/>
    <lineage>
        <taxon>Bacteria</taxon>
        <taxon>Pseudomonadati</taxon>
        <taxon>Pseudomonadota</taxon>
        <taxon>Alphaproteobacteria</taxon>
        <taxon>Rickettsiales</taxon>
        <taxon>Rickettsiaceae</taxon>
        <taxon>Rickettsieae</taxon>
        <taxon>Rickettsia</taxon>
        <taxon>belli group</taxon>
    </lineage>
</organism>
<comment type="function">
    <text evidence="1">One of the primary rRNA binding proteins, this protein initially binds near the 5'-end of the 23S rRNA. It is important during the early stages of 50S assembly. It makes multiple contacts with different domains of the 23S rRNA in the assembled 50S subunit and ribosome.</text>
</comment>
<comment type="function">
    <text evidence="1">Forms part of the polypeptide exit tunnel.</text>
</comment>
<comment type="subunit">
    <text evidence="1">Part of the 50S ribosomal subunit.</text>
</comment>
<comment type="similarity">
    <text evidence="1">Belongs to the universal ribosomal protein uL4 family.</text>
</comment>
<dbReference type="EMBL" id="CP000409">
    <property type="protein sequence ID" value="ABV73798.1"/>
    <property type="molecule type" value="Genomic_DNA"/>
</dbReference>
<dbReference type="RefSeq" id="WP_012148993.1">
    <property type="nucleotide sequence ID" value="NC_009879.1"/>
</dbReference>
<dbReference type="SMR" id="A8EZL5"/>
<dbReference type="STRING" id="293613.A1E_04365"/>
<dbReference type="KEGG" id="rcm:A1E_04365"/>
<dbReference type="eggNOG" id="COG0088">
    <property type="taxonomic scope" value="Bacteria"/>
</dbReference>
<dbReference type="HOGENOM" id="CLU_041575_5_1_5"/>
<dbReference type="Proteomes" id="UP000007056">
    <property type="component" value="Chromosome"/>
</dbReference>
<dbReference type="GO" id="GO:1990904">
    <property type="term" value="C:ribonucleoprotein complex"/>
    <property type="evidence" value="ECO:0007669"/>
    <property type="project" value="UniProtKB-KW"/>
</dbReference>
<dbReference type="GO" id="GO:0005840">
    <property type="term" value="C:ribosome"/>
    <property type="evidence" value="ECO:0007669"/>
    <property type="project" value="UniProtKB-KW"/>
</dbReference>
<dbReference type="GO" id="GO:0019843">
    <property type="term" value="F:rRNA binding"/>
    <property type="evidence" value="ECO:0007669"/>
    <property type="project" value="UniProtKB-UniRule"/>
</dbReference>
<dbReference type="GO" id="GO:0003735">
    <property type="term" value="F:structural constituent of ribosome"/>
    <property type="evidence" value="ECO:0007669"/>
    <property type="project" value="InterPro"/>
</dbReference>
<dbReference type="GO" id="GO:0006412">
    <property type="term" value="P:translation"/>
    <property type="evidence" value="ECO:0007669"/>
    <property type="project" value="UniProtKB-UniRule"/>
</dbReference>
<dbReference type="FunFam" id="3.40.1370.10:FF:000015">
    <property type="entry name" value="50S ribosomal protein L4"/>
    <property type="match status" value="1"/>
</dbReference>
<dbReference type="Gene3D" id="3.40.1370.10">
    <property type="match status" value="1"/>
</dbReference>
<dbReference type="HAMAP" id="MF_01328_B">
    <property type="entry name" value="Ribosomal_uL4_B"/>
    <property type="match status" value="1"/>
</dbReference>
<dbReference type="InterPro" id="IPR002136">
    <property type="entry name" value="Ribosomal_uL4"/>
</dbReference>
<dbReference type="InterPro" id="IPR013005">
    <property type="entry name" value="Ribosomal_uL4-like"/>
</dbReference>
<dbReference type="InterPro" id="IPR023574">
    <property type="entry name" value="Ribosomal_uL4_dom_sf"/>
</dbReference>
<dbReference type="NCBIfam" id="TIGR03953">
    <property type="entry name" value="rplD_bact"/>
    <property type="match status" value="1"/>
</dbReference>
<dbReference type="PANTHER" id="PTHR10746">
    <property type="entry name" value="50S RIBOSOMAL PROTEIN L4"/>
    <property type="match status" value="1"/>
</dbReference>
<dbReference type="PANTHER" id="PTHR10746:SF6">
    <property type="entry name" value="LARGE RIBOSOMAL SUBUNIT PROTEIN UL4M"/>
    <property type="match status" value="1"/>
</dbReference>
<dbReference type="Pfam" id="PF00573">
    <property type="entry name" value="Ribosomal_L4"/>
    <property type="match status" value="1"/>
</dbReference>
<dbReference type="SUPFAM" id="SSF52166">
    <property type="entry name" value="Ribosomal protein L4"/>
    <property type="match status" value="1"/>
</dbReference>
<keyword id="KW-0687">Ribonucleoprotein</keyword>
<keyword id="KW-0689">Ribosomal protein</keyword>
<keyword id="KW-0694">RNA-binding</keyword>
<keyword id="KW-0699">rRNA-binding</keyword>
<proteinExistence type="inferred from homology"/>
<feature type="chain" id="PRO_1000052485" description="Large ribosomal subunit protein uL4">
    <location>
        <begin position="1"/>
        <end position="207"/>
    </location>
</feature>
<feature type="region of interest" description="Disordered" evidence="2">
    <location>
        <begin position="50"/>
        <end position="76"/>
    </location>
</feature>
<reference key="1">
    <citation type="submission" date="2007-09" db="EMBL/GenBank/DDBJ databases">
        <title>Complete genome sequence of Rickettsia canadensis.</title>
        <authorList>
            <person name="Madan A."/>
            <person name="Fahey J."/>
            <person name="Helton E."/>
            <person name="Ketteman M."/>
            <person name="Madan A."/>
            <person name="Rodrigues S."/>
            <person name="Sanchez A."/>
            <person name="Whiting M."/>
            <person name="Dasch G."/>
            <person name="Eremeeva M."/>
        </authorList>
    </citation>
    <scope>NUCLEOTIDE SEQUENCE [LARGE SCALE GENOMIC DNA]</scope>
    <source>
        <strain>McKiel</strain>
    </source>
</reference>